<name>PYRB_LEUCK</name>
<sequence length="303" mass="34281">MRHFLNINAIELDDVVDLVHRALAIKAGRSVIQSNLTVTNLFFENSTRTHSSFQMAENRLGYQQIDIDPQQSSMSKGESLTDTLKTLKAIGVDVAVIRHTVNNWYDQVLTATGHEIPHLINAGDGSGQHPSQSLLDLVTIYEQFNHFAGLNIRIVGDLAHSRVARSNAEILHHLGANMTFSGPKDWQPNDFGKFGQFVAIDDDWENLDVVIFLRVQHERITQTENQNFSTKQYHEQFGLNRVRYERLKAAAIIMHPAPVNRDVEIADELVEAPKSRIFEQMNNGVYARMAILEYTTEATHATH</sequence>
<protein>
    <recommendedName>
        <fullName evidence="1">Aspartate carbamoyltransferase catalytic subunit</fullName>
        <ecNumber evidence="1">2.1.3.2</ecNumber>
    </recommendedName>
    <alternativeName>
        <fullName evidence="1">Aspartate transcarbamylase</fullName>
        <shortName evidence="1">ATCase</shortName>
    </alternativeName>
</protein>
<reference key="1">
    <citation type="journal article" date="2008" name="J. Bacteriol.">
        <title>Complete genome sequence of Leuconostoc citreum KM20.</title>
        <authorList>
            <person name="Kim J.F."/>
            <person name="Jeong H."/>
            <person name="Lee J.-S."/>
            <person name="Choi S.-H."/>
            <person name="Ha M."/>
            <person name="Hur C.-G."/>
            <person name="Kim J.-S."/>
            <person name="Lee S."/>
            <person name="Park H.-S."/>
            <person name="Park Y.-H."/>
            <person name="Oh T.K."/>
        </authorList>
    </citation>
    <scope>NUCLEOTIDE SEQUENCE [LARGE SCALE GENOMIC DNA]</scope>
    <source>
        <strain>KM20</strain>
    </source>
</reference>
<accession>B1MZ77</accession>
<keyword id="KW-0665">Pyrimidine biosynthesis</keyword>
<keyword id="KW-1185">Reference proteome</keyword>
<keyword id="KW-0808">Transferase</keyword>
<gene>
    <name evidence="1" type="primary">pyrB</name>
    <name type="ordered locus">LCK_01002</name>
</gene>
<dbReference type="EC" id="2.1.3.2" evidence="1"/>
<dbReference type="EMBL" id="DQ489736">
    <property type="protein sequence ID" value="ACA82829.1"/>
    <property type="molecule type" value="Genomic_DNA"/>
</dbReference>
<dbReference type="RefSeq" id="WP_004907564.1">
    <property type="nucleotide sequence ID" value="NC_010471.1"/>
</dbReference>
<dbReference type="SMR" id="B1MZ77"/>
<dbReference type="STRING" id="349519.LCK_01002"/>
<dbReference type="KEGG" id="lci:LCK_01002"/>
<dbReference type="eggNOG" id="COG0540">
    <property type="taxonomic scope" value="Bacteria"/>
</dbReference>
<dbReference type="HOGENOM" id="CLU_043846_2_1_9"/>
<dbReference type="OrthoDB" id="9774690at2"/>
<dbReference type="UniPathway" id="UPA00070">
    <property type="reaction ID" value="UER00116"/>
</dbReference>
<dbReference type="Proteomes" id="UP000002166">
    <property type="component" value="Chromosome"/>
</dbReference>
<dbReference type="GO" id="GO:0005829">
    <property type="term" value="C:cytosol"/>
    <property type="evidence" value="ECO:0007669"/>
    <property type="project" value="TreeGrafter"/>
</dbReference>
<dbReference type="GO" id="GO:0016597">
    <property type="term" value="F:amino acid binding"/>
    <property type="evidence" value="ECO:0007669"/>
    <property type="project" value="InterPro"/>
</dbReference>
<dbReference type="GO" id="GO:0004070">
    <property type="term" value="F:aspartate carbamoyltransferase activity"/>
    <property type="evidence" value="ECO:0007669"/>
    <property type="project" value="UniProtKB-UniRule"/>
</dbReference>
<dbReference type="GO" id="GO:0006207">
    <property type="term" value="P:'de novo' pyrimidine nucleobase biosynthetic process"/>
    <property type="evidence" value="ECO:0007669"/>
    <property type="project" value="InterPro"/>
</dbReference>
<dbReference type="GO" id="GO:0044205">
    <property type="term" value="P:'de novo' UMP biosynthetic process"/>
    <property type="evidence" value="ECO:0007669"/>
    <property type="project" value="UniProtKB-UniRule"/>
</dbReference>
<dbReference type="GO" id="GO:0006520">
    <property type="term" value="P:amino acid metabolic process"/>
    <property type="evidence" value="ECO:0007669"/>
    <property type="project" value="InterPro"/>
</dbReference>
<dbReference type="FunFam" id="3.40.50.1370:FF:000011">
    <property type="entry name" value="Aspartate carbamoyltransferase"/>
    <property type="match status" value="1"/>
</dbReference>
<dbReference type="Gene3D" id="3.40.50.1370">
    <property type="entry name" value="Aspartate/ornithine carbamoyltransferase"/>
    <property type="match status" value="2"/>
</dbReference>
<dbReference type="HAMAP" id="MF_00001">
    <property type="entry name" value="Asp_carb_tr"/>
    <property type="match status" value="1"/>
</dbReference>
<dbReference type="InterPro" id="IPR006132">
    <property type="entry name" value="Asp/Orn_carbamoyltranf_P-bd"/>
</dbReference>
<dbReference type="InterPro" id="IPR006130">
    <property type="entry name" value="Asp/Orn_carbamoylTrfase"/>
</dbReference>
<dbReference type="InterPro" id="IPR036901">
    <property type="entry name" value="Asp/Orn_carbamoylTrfase_sf"/>
</dbReference>
<dbReference type="InterPro" id="IPR002082">
    <property type="entry name" value="Asp_carbamoyltransf"/>
</dbReference>
<dbReference type="InterPro" id="IPR006131">
    <property type="entry name" value="Asp_carbamoyltransf_Asp/Orn-bd"/>
</dbReference>
<dbReference type="NCBIfam" id="TIGR00670">
    <property type="entry name" value="asp_carb_tr"/>
    <property type="match status" value="1"/>
</dbReference>
<dbReference type="NCBIfam" id="NF002032">
    <property type="entry name" value="PRK00856.1"/>
    <property type="match status" value="1"/>
</dbReference>
<dbReference type="PANTHER" id="PTHR45753:SF6">
    <property type="entry name" value="ASPARTATE CARBAMOYLTRANSFERASE"/>
    <property type="match status" value="1"/>
</dbReference>
<dbReference type="PANTHER" id="PTHR45753">
    <property type="entry name" value="ORNITHINE CARBAMOYLTRANSFERASE, MITOCHONDRIAL"/>
    <property type="match status" value="1"/>
</dbReference>
<dbReference type="Pfam" id="PF00185">
    <property type="entry name" value="OTCace"/>
    <property type="match status" value="1"/>
</dbReference>
<dbReference type="Pfam" id="PF02729">
    <property type="entry name" value="OTCace_N"/>
    <property type="match status" value="1"/>
</dbReference>
<dbReference type="PRINTS" id="PR00100">
    <property type="entry name" value="AOTCASE"/>
</dbReference>
<dbReference type="PRINTS" id="PR00101">
    <property type="entry name" value="ATCASE"/>
</dbReference>
<dbReference type="SUPFAM" id="SSF53671">
    <property type="entry name" value="Aspartate/ornithine carbamoyltransferase"/>
    <property type="match status" value="1"/>
</dbReference>
<dbReference type="PROSITE" id="PS00097">
    <property type="entry name" value="CARBAMOYLTRANSFERASE"/>
    <property type="match status" value="1"/>
</dbReference>
<comment type="function">
    <text evidence="1">Catalyzes the condensation of carbamoyl phosphate and aspartate to form carbamoyl aspartate and inorganic phosphate, the committed step in the de novo pyrimidine nucleotide biosynthesis pathway.</text>
</comment>
<comment type="catalytic activity">
    <reaction evidence="1">
        <text>carbamoyl phosphate + L-aspartate = N-carbamoyl-L-aspartate + phosphate + H(+)</text>
        <dbReference type="Rhea" id="RHEA:20013"/>
        <dbReference type="ChEBI" id="CHEBI:15378"/>
        <dbReference type="ChEBI" id="CHEBI:29991"/>
        <dbReference type="ChEBI" id="CHEBI:32814"/>
        <dbReference type="ChEBI" id="CHEBI:43474"/>
        <dbReference type="ChEBI" id="CHEBI:58228"/>
        <dbReference type="EC" id="2.1.3.2"/>
    </reaction>
</comment>
<comment type="pathway">
    <text evidence="1">Pyrimidine metabolism; UMP biosynthesis via de novo pathway; (S)-dihydroorotate from bicarbonate: step 2/3.</text>
</comment>
<comment type="subunit">
    <text evidence="1">Heterododecamer (2C3:3R2) of six catalytic PyrB chains organized as two trimers (C3), and six regulatory PyrI chains organized as three dimers (R2).</text>
</comment>
<comment type="similarity">
    <text evidence="1">Belongs to the aspartate/ornithine carbamoyltransferase superfamily. ATCase family.</text>
</comment>
<organism>
    <name type="scientific">Leuconostoc citreum (strain KM20)</name>
    <dbReference type="NCBI Taxonomy" id="349519"/>
    <lineage>
        <taxon>Bacteria</taxon>
        <taxon>Bacillati</taxon>
        <taxon>Bacillota</taxon>
        <taxon>Bacilli</taxon>
        <taxon>Lactobacillales</taxon>
        <taxon>Lactobacillaceae</taxon>
        <taxon>Leuconostoc</taxon>
    </lineage>
</organism>
<proteinExistence type="inferred from homology"/>
<feature type="chain" id="PRO_1000088776" description="Aspartate carbamoyltransferase catalytic subunit">
    <location>
        <begin position="1"/>
        <end position="303"/>
    </location>
</feature>
<feature type="binding site" evidence="1">
    <location>
        <position position="48"/>
    </location>
    <ligand>
        <name>carbamoyl phosphate</name>
        <dbReference type="ChEBI" id="CHEBI:58228"/>
    </ligand>
</feature>
<feature type="binding site" evidence="1">
    <location>
        <position position="49"/>
    </location>
    <ligand>
        <name>carbamoyl phosphate</name>
        <dbReference type="ChEBI" id="CHEBI:58228"/>
    </ligand>
</feature>
<feature type="binding site" evidence="1">
    <location>
        <position position="76"/>
    </location>
    <ligand>
        <name>L-aspartate</name>
        <dbReference type="ChEBI" id="CHEBI:29991"/>
    </ligand>
</feature>
<feature type="binding site" evidence="1">
    <location>
        <position position="98"/>
    </location>
    <ligand>
        <name>carbamoyl phosphate</name>
        <dbReference type="ChEBI" id="CHEBI:58228"/>
    </ligand>
</feature>
<feature type="binding site" evidence="1">
    <location>
        <position position="129"/>
    </location>
    <ligand>
        <name>carbamoyl phosphate</name>
        <dbReference type="ChEBI" id="CHEBI:58228"/>
    </ligand>
</feature>
<feature type="binding site" evidence="1">
    <location>
        <position position="132"/>
    </location>
    <ligand>
        <name>carbamoyl phosphate</name>
        <dbReference type="ChEBI" id="CHEBI:58228"/>
    </ligand>
</feature>
<feature type="binding site" evidence="1">
    <location>
        <position position="162"/>
    </location>
    <ligand>
        <name>L-aspartate</name>
        <dbReference type="ChEBI" id="CHEBI:29991"/>
    </ligand>
</feature>
<feature type="binding site" evidence="1">
    <location>
        <position position="214"/>
    </location>
    <ligand>
        <name>L-aspartate</name>
        <dbReference type="ChEBI" id="CHEBI:29991"/>
    </ligand>
</feature>
<feature type="binding site" evidence="1">
    <location>
        <position position="257"/>
    </location>
    <ligand>
        <name>carbamoyl phosphate</name>
        <dbReference type="ChEBI" id="CHEBI:58228"/>
    </ligand>
</feature>
<feature type="binding site" evidence="1">
    <location>
        <position position="258"/>
    </location>
    <ligand>
        <name>carbamoyl phosphate</name>
        <dbReference type="ChEBI" id="CHEBI:58228"/>
    </ligand>
</feature>
<evidence type="ECO:0000255" key="1">
    <source>
        <dbReference type="HAMAP-Rule" id="MF_00001"/>
    </source>
</evidence>